<protein>
    <recommendedName>
        <fullName evidence="1">Probable transcriptional regulatory protein Pfl01_3677</fullName>
    </recommendedName>
</protein>
<comment type="subcellular location">
    <subcellularLocation>
        <location evidence="1">Cytoplasm</location>
    </subcellularLocation>
</comment>
<comment type="similarity">
    <text evidence="1">Belongs to the TACO1 family.</text>
</comment>
<name>Y3677_PSEPF</name>
<accession>Q3K9Y9</accession>
<feature type="chain" id="PRO_0000257102" description="Probable transcriptional regulatory protein Pfl01_3677">
    <location>
        <begin position="1"/>
        <end position="234"/>
    </location>
</feature>
<sequence length="234" mass="25056">MGAQWKVKHKEAAANAKGKIFGKLVKEITIAARNGADTATNAHLRLVVEQAKKASMPKETLDRAIKKGAGLLGETVQYHRVTYEGFAPHQVPLIVECVTDNINRTVAEIRVAFRKGQLGASGSVAWDFNHVGMIEASPDTPDADPEMAAIEAGAQDFEAGEEGATLFLTDPTDLDAVQKALPEQGFTVLSAKLGYQPKNPVSGLSDEQMAEVEAFLEGLDNHDDVQDMFVGLAG</sequence>
<organism>
    <name type="scientific">Pseudomonas fluorescens (strain Pf0-1)</name>
    <dbReference type="NCBI Taxonomy" id="205922"/>
    <lineage>
        <taxon>Bacteria</taxon>
        <taxon>Pseudomonadati</taxon>
        <taxon>Pseudomonadota</taxon>
        <taxon>Gammaproteobacteria</taxon>
        <taxon>Pseudomonadales</taxon>
        <taxon>Pseudomonadaceae</taxon>
        <taxon>Pseudomonas</taxon>
    </lineage>
</organism>
<proteinExistence type="inferred from homology"/>
<gene>
    <name type="ordered locus">Pfl01_3677</name>
</gene>
<dbReference type="EMBL" id="CP000094">
    <property type="protein sequence ID" value="ABA75415.1"/>
    <property type="molecule type" value="Genomic_DNA"/>
</dbReference>
<dbReference type="RefSeq" id="WP_011335021.1">
    <property type="nucleotide sequence ID" value="NC_007492.2"/>
</dbReference>
<dbReference type="SMR" id="Q3K9Y9"/>
<dbReference type="KEGG" id="pfo:Pfl01_3677"/>
<dbReference type="eggNOG" id="COG0217">
    <property type="taxonomic scope" value="Bacteria"/>
</dbReference>
<dbReference type="HOGENOM" id="CLU_062974_2_2_6"/>
<dbReference type="Proteomes" id="UP000002704">
    <property type="component" value="Chromosome"/>
</dbReference>
<dbReference type="GO" id="GO:0005737">
    <property type="term" value="C:cytoplasm"/>
    <property type="evidence" value="ECO:0007669"/>
    <property type="project" value="UniProtKB-SubCell"/>
</dbReference>
<dbReference type="GO" id="GO:0003677">
    <property type="term" value="F:DNA binding"/>
    <property type="evidence" value="ECO:0007669"/>
    <property type="project" value="UniProtKB-UniRule"/>
</dbReference>
<dbReference type="GO" id="GO:0006355">
    <property type="term" value="P:regulation of DNA-templated transcription"/>
    <property type="evidence" value="ECO:0007669"/>
    <property type="project" value="UniProtKB-UniRule"/>
</dbReference>
<dbReference type="Gene3D" id="1.10.10.200">
    <property type="match status" value="1"/>
</dbReference>
<dbReference type="Gene3D" id="3.30.70.980">
    <property type="match status" value="2"/>
</dbReference>
<dbReference type="HAMAP" id="MF_00693">
    <property type="entry name" value="Transcrip_reg_TACO1"/>
    <property type="match status" value="1"/>
</dbReference>
<dbReference type="InterPro" id="IPR017856">
    <property type="entry name" value="Integrase-like_N"/>
</dbReference>
<dbReference type="InterPro" id="IPR048300">
    <property type="entry name" value="TACO1_YebC-like_2nd/3rd_dom"/>
</dbReference>
<dbReference type="InterPro" id="IPR049083">
    <property type="entry name" value="TACO1_YebC_N"/>
</dbReference>
<dbReference type="InterPro" id="IPR002876">
    <property type="entry name" value="Transcrip_reg_TACO1-like"/>
</dbReference>
<dbReference type="InterPro" id="IPR026564">
    <property type="entry name" value="Transcrip_reg_TACO1-like_dom3"/>
</dbReference>
<dbReference type="InterPro" id="IPR029072">
    <property type="entry name" value="YebC-like"/>
</dbReference>
<dbReference type="NCBIfam" id="NF009044">
    <property type="entry name" value="PRK12378.1"/>
    <property type="match status" value="1"/>
</dbReference>
<dbReference type="PANTHER" id="PTHR12532">
    <property type="entry name" value="TRANSLATIONAL ACTIVATOR OF CYTOCHROME C OXIDASE 1"/>
    <property type="match status" value="1"/>
</dbReference>
<dbReference type="PANTHER" id="PTHR12532:SF0">
    <property type="entry name" value="TRANSLATIONAL ACTIVATOR OF CYTOCHROME C OXIDASE 1"/>
    <property type="match status" value="1"/>
</dbReference>
<dbReference type="Pfam" id="PF20772">
    <property type="entry name" value="TACO1_YebC_N"/>
    <property type="match status" value="1"/>
</dbReference>
<dbReference type="Pfam" id="PF01709">
    <property type="entry name" value="Transcrip_reg"/>
    <property type="match status" value="1"/>
</dbReference>
<dbReference type="SUPFAM" id="SSF75625">
    <property type="entry name" value="YebC-like"/>
    <property type="match status" value="1"/>
</dbReference>
<reference key="1">
    <citation type="journal article" date="2009" name="Genome Biol.">
        <title>Genomic and genetic analyses of diversity and plant interactions of Pseudomonas fluorescens.</title>
        <authorList>
            <person name="Silby M.W."/>
            <person name="Cerdeno-Tarraga A.M."/>
            <person name="Vernikos G.S."/>
            <person name="Giddens S.R."/>
            <person name="Jackson R.W."/>
            <person name="Preston G.M."/>
            <person name="Zhang X.-X."/>
            <person name="Moon C.D."/>
            <person name="Gehrig S.M."/>
            <person name="Godfrey S.A.C."/>
            <person name="Knight C.G."/>
            <person name="Malone J.G."/>
            <person name="Robinson Z."/>
            <person name="Spiers A.J."/>
            <person name="Harris S."/>
            <person name="Challis G.L."/>
            <person name="Yaxley A.M."/>
            <person name="Harris D."/>
            <person name="Seeger K."/>
            <person name="Murphy L."/>
            <person name="Rutter S."/>
            <person name="Squares R."/>
            <person name="Quail M.A."/>
            <person name="Saunders E."/>
            <person name="Mavromatis K."/>
            <person name="Brettin T.S."/>
            <person name="Bentley S.D."/>
            <person name="Hothersall J."/>
            <person name="Stephens E."/>
            <person name="Thomas C.M."/>
            <person name="Parkhill J."/>
            <person name="Levy S.B."/>
            <person name="Rainey P.B."/>
            <person name="Thomson N.R."/>
        </authorList>
    </citation>
    <scope>NUCLEOTIDE SEQUENCE [LARGE SCALE GENOMIC DNA]</scope>
    <source>
        <strain>Pf0-1</strain>
    </source>
</reference>
<keyword id="KW-0963">Cytoplasm</keyword>
<keyword id="KW-0238">DNA-binding</keyword>
<keyword id="KW-0804">Transcription</keyword>
<keyword id="KW-0805">Transcription regulation</keyword>
<evidence type="ECO:0000255" key="1">
    <source>
        <dbReference type="HAMAP-Rule" id="MF_00693"/>
    </source>
</evidence>